<feature type="chain" id="PRO_0000151380" description="Ketol-acid reductoisomerase (NADP(+))">
    <location>
        <begin position="1"/>
        <end position="494"/>
    </location>
</feature>
<feature type="domain" description="KARI N-terminal Rossmann" evidence="2">
    <location>
        <begin position="14"/>
        <end position="208"/>
    </location>
</feature>
<feature type="domain" description="KARI C-terminal knotted 1" evidence="3">
    <location>
        <begin position="209"/>
        <end position="344"/>
    </location>
</feature>
<feature type="domain" description="KARI C-terminal knotted 2" evidence="3">
    <location>
        <begin position="345"/>
        <end position="487"/>
    </location>
</feature>
<feature type="active site" evidence="1">
    <location>
        <position position="132"/>
    </location>
</feature>
<feature type="binding site" evidence="1">
    <location>
        <begin position="45"/>
        <end position="48"/>
    </location>
    <ligand>
        <name>NADP(+)</name>
        <dbReference type="ChEBI" id="CHEBI:58349"/>
    </ligand>
</feature>
<feature type="binding site" evidence="1">
    <location>
        <position position="68"/>
    </location>
    <ligand>
        <name>NADP(+)</name>
        <dbReference type="ChEBI" id="CHEBI:58349"/>
    </ligand>
</feature>
<feature type="binding site" evidence="1">
    <location>
        <position position="76"/>
    </location>
    <ligand>
        <name>NADP(+)</name>
        <dbReference type="ChEBI" id="CHEBI:58349"/>
    </ligand>
</feature>
<feature type="binding site" evidence="1">
    <location>
        <position position="78"/>
    </location>
    <ligand>
        <name>NADP(+)</name>
        <dbReference type="ChEBI" id="CHEBI:58349"/>
    </ligand>
</feature>
<feature type="binding site" evidence="1">
    <location>
        <begin position="108"/>
        <end position="110"/>
    </location>
    <ligand>
        <name>NADP(+)</name>
        <dbReference type="ChEBI" id="CHEBI:58349"/>
    </ligand>
</feature>
<feature type="binding site" evidence="1">
    <location>
        <position position="158"/>
    </location>
    <ligand>
        <name>NADP(+)</name>
        <dbReference type="ChEBI" id="CHEBI:58349"/>
    </ligand>
</feature>
<feature type="binding site" evidence="1">
    <location>
        <position position="217"/>
    </location>
    <ligand>
        <name>Mg(2+)</name>
        <dbReference type="ChEBI" id="CHEBI:18420"/>
        <label>1</label>
    </ligand>
</feature>
<feature type="binding site" evidence="1">
    <location>
        <position position="217"/>
    </location>
    <ligand>
        <name>Mg(2+)</name>
        <dbReference type="ChEBI" id="CHEBI:18420"/>
        <label>2</label>
    </ligand>
</feature>
<feature type="binding site" evidence="1">
    <location>
        <position position="221"/>
    </location>
    <ligand>
        <name>Mg(2+)</name>
        <dbReference type="ChEBI" id="CHEBI:18420"/>
        <label>1</label>
    </ligand>
</feature>
<feature type="binding site" evidence="1">
    <location>
        <position position="389"/>
    </location>
    <ligand>
        <name>Mg(2+)</name>
        <dbReference type="ChEBI" id="CHEBI:18420"/>
        <label>2</label>
    </ligand>
</feature>
<feature type="binding site" evidence="1">
    <location>
        <position position="393"/>
    </location>
    <ligand>
        <name>Mg(2+)</name>
        <dbReference type="ChEBI" id="CHEBI:18420"/>
        <label>2</label>
    </ligand>
</feature>
<feature type="binding site" evidence="1">
    <location>
        <position position="414"/>
    </location>
    <ligand>
        <name>substrate</name>
    </ligand>
</feature>
<proteinExistence type="inferred from homology"/>
<keyword id="KW-0028">Amino-acid biosynthesis</keyword>
<keyword id="KW-0100">Branched-chain amino acid biosynthesis</keyword>
<keyword id="KW-0460">Magnesium</keyword>
<keyword id="KW-0479">Metal-binding</keyword>
<keyword id="KW-0521">NADP</keyword>
<keyword id="KW-0560">Oxidoreductase</keyword>
<keyword id="KW-0677">Repeat</keyword>
<name>ILVC_VIBVU</name>
<protein>
    <recommendedName>
        <fullName evidence="1">Ketol-acid reductoisomerase (NADP(+))</fullName>
        <shortName evidence="1">KARI</shortName>
        <ecNumber evidence="1">1.1.1.86</ecNumber>
    </recommendedName>
    <alternativeName>
        <fullName evidence="1">Acetohydroxy-acid isomeroreductase</fullName>
        <shortName evidence="1">AHIR</shortName>
    </alternativeName>
    <alternativeName>
        <fullName evidence="1">Alpha-keto-beta-hydroxylacyl reductoisomerase</fullName>
    </alternativeName>
    <alternativeName>
        <fullName evidence="1">Ketol-acid reductoisomerase type 2</fullName>
    </alternativeName>
    <alternativeName>
        <fullName evidence="1">Ketol-acid reductoisomerase type II</fullName>
    </alternativeName>
</protein>
<evidence type="ECO:0000255" key="1">
    <source>
        <dbReference type="HAMAP-Rule" id="MF_00435"/>
    </source>
</evidence>
<evidence type="ECO:0000255" key="2">
    <source>
        <dbReference type="PROSITE-ProRule" id="PRU01197"/>
    </source>
</evidence>
<evidence type="ECO:0000255" key="3">
    <source>
        <dbReference type="PROSITE-ProRule" id="PRU01198"/>
    </source>
</evidence>
<dbReference type="EC" id="1.1.1.86" evidence="1"/>
<dbReference type="EMBL" id="AE016795">
    <property type="protein sequence ID" value="AAO09555.1"/>
    <property type="molecule type" value="Genomic_DNA"/>
</dbReference>
<dbReference type="RefSeq" id="WP_011079096.1">
    <property type="nucleotide sequence ID" value="NC_004459.3"/>
</dbReference>
<dbReference type="SMR" id="Q8DDC8"/>
<dbReference type="GeneID" id="93895355"/>
<dbReference type="KEGG" id="vvu:VV1_1077"/>
<dbReference type="HOGENOM" id="CLU_551905_0_0_6"/>
<dbReference type="UniPathway" id="UPA00047">
    <property type="reaction ID" value="UER00056"/>
</dbReference>
<dbReference type="UniPathway" id="UPA00049">
    <property type="reaction ID" value="UER00060"/>
</dbReference>
<dbReference type="Proteomes" id="UP000002275">
    <property type="component" value="Chromosome 1"/>
</dbReference>
<dbReference type="GO" id="GO:0005829">
    <property type="term" value="C:cytosol"/>
    <property type="evidence" value="ECO:0007669"/>
    <property type="project" value="TreeGrafter"/>
</dbReference>
<dbReference type="GO" id="GO:0004455">
    <property type="term" value="F:ketol-acid reductoisomerase activity"/>
    <property type="evidence" value="ECO:0007669"/>
    <property type="project" value="UniProtKB-UniRule"/>
</dbReference>
<dbReference type="GO" id="GO:0000287">
    <property type="term" value="F:magnesium ion binding"/>
    <property type="evidence" value="ECO:0007669"/>
    <property type="project" value="UniProtKB-UniRule"/>
</dbReference>
<dbReference type="GO" id="GO:0009097">
    <property type="term" value="P:isoleucine biosynthetic process"/>
    <property type="evidence" value="ECO:0007669"/>
    <property type="project" value="UniProtKB-UniRule"/>
</dbReference>
<dbReference type="GO" id="GO:0009099">
    <property type="term" value="P:L-valine biosynthetic process"/>
    <property type="evidence" value="ECO:0007669"/>
    <property type="project" value="UniProtKB-UniRule"/>
</dbReference>
<dbReference type="FunFam" id="1.10.1040.10:FF:000007">
    <property type="entry name" value="Ketol-acid reductoisomerase (NADP(+))"/>
    <property type="match status" value="1"/>
</dbReference>
<dbReference type="FunFam" id="3.40.50.720:FF:000043">
    <property type="entry name" value="Ketol-acid reductoisomerase (NADP(+))"/>
    <property type="match status" value="1"/>
</dbReference>
<dbReference type="Gene3D" id="1.10.1040.10">
    <property type="entry name" value="N-(1-d-carboxylethyl)-l-norvaline Dehydrogenase, domain 2"/>
    <property type="match status" value="1"/>
</dbReference>
<dbReference type="Gene3D" id="3.40.50.720">
    <property type="entry name" value="NAD(P)-binding Rossmann-like Domain"/>
    <property type="match status" value="1"/>
</dbReference>
<dbReference type="HAMAP" id="MF_00435">
    <property type="entry name" value="IlvC"/>
    <property type="match status" value="1"/>
</dbReference>
<dbReference type="InterPro" id="IPR008927">
    <property type="entry name" value="6-PGluconate_DH-like_C_sf"/>
</dbReference>
<dbReference type="InterPro" id="IPR013328">
    <property type="entry name" value="6PGD_dom2"/>
</dbReference>
<dbReference type="InterPro" id="IPR013023">
    <property type="entry name" value="KARI"/>
</dbReference>
<dbReference type="InterPro" id="IPR000506">
    <property type="entry name" value="KARI_C"/>
</dbReference>
<dbReference type="InterPro" id="IPR013116">
    <property type="entry name" value="KARI_N"/>
</dbReference>
<dbReference type="InterPro" id="IPR036291">
    <property type="entry name" value="NAD(P)-bd_dom_sf"/>
</dbReference>
<dbReference type="NCBIfam" id="TIGR00465">
    <property type="entry name" value="ilvC"/>
    <property type="match status" value="1"/>
</dbReference>
<dbReference type="NCBIfam" id="NF003557">
    <property type="entry name" value="PRK05225.1"/>
    <property type="match status" value="1"/>
</dbReference>
<dbReference type="PANTHER" id="PTHR21371">
    <property type="entry name" value="KETOL-ACID REDUCTOISOMERASE, MITOCHONDRIAL"/>
    <property type="match status" value="1"/>
</dbReference>
<dbReference type="PANTHER" id="PTHR21371:SF1">
    <property type="entry name" value="KETOL-ACID REDUCTOISOMERASE, MITOCHONDRIAL"/>
    <property type="match status" value="1"/>
</dbReference>
<dbReference type="Pfam" id="PF01450">
    <property type="entry name" value="KARI_C"/>
    <property type="match status" value="2"/>
</dbReference>
<dbReference type="Pfam" id="PF07991">
    <property type="entry name" value="KARI_N"/>
    <property type="match status" value="1"/>
</dbReference>
<dbReference type="SUPFAM" id="SSF48179">
    <property type="entry name" value="6-phosphogluconate dehydrogenase C-terminal domain-like"/>
    <property type="match status" value="2"/>
</dbReference>
<dbReference type="SUPFAM" id="SSF51735">
    <property type="entry name" value="NAD(P)-binding Rossmann-fold domains"/>
    <property type="match status" value="1"/>
</dbReference>
<dbReference type="PROSITE" id="PS51851">
    <property type="entry name" value="KARI_C"/>
    <property type="match status" value="2"/>
</dbReference>
<dbReference type="PROSITE" id="PS51850">
    <property type="entry name" value="KARI_N"/>
    <property type="match status" value="1"/>
</dbReference>
<gene>
    <name evidence="1" type="primary">ilvC</name>
    <name type="ordered locus">VV1_1077</name>
</gene>
<reference key="1">
    <citation type="submission" date="2002-12" db="EMBL/GenBank/DDBJ databases">
        <title>Complete genome sequence of Vibrio vulnificus CMCP6.</title>
        <authorList>
            <person name="Rhee J.H."/>
            <person name="Kim S.Y."/>
            <person name="Chung S.S."/>
            <person name="Kim J.J."/>
            <person name="Moon Y.H."/>
            <person name="Jeong H."/>
            <person name="Choy H.E."/>
        </authorList>
    </citation>
    <scope>NUCLEOTIDE SEQUENCE [LARGE SCALE GENOMIC DNA]</scope>
    <source>
        <strain>CMCP6</strain>
    </source>
</reference>
<organism>
    <name type="scientific">Vibrio vulnificus (strain CMCP6)</name>
    <dbReference type="NCBI Taxonomy" id="216895"/>
    <lineage>
        <taxon>Bacteria</taxon>
        <taxon>Pseudomonadati</taxon>
        <taxon>Pseudomonadota</taxon>
        <taxon>Gammaproteobacteria</taxon>
        <taxon>Vibrionales</taxon>
        <taxon>Vibrionaceae</taxon>
        <taxon>Vibrio</taxon>
    </lineage>
</organism>
<sequence>MANYFNTLNLREQLDQLGRCRFMDRSEFATEADYLKGKKVVIVGCGAQGLNQGLNMRDSGLDVAYALRQAAIDEQRQSYKNAKENGFEVGSYETLIPQADLVVNLTPDKQHTNVVETVMPLMKEGAALGYSHGFNVVEEGMQIRKDLTVVMVAPKCPGTEVREEYKRGFGVPTLIAVHPENDPKGEGWDIAKAWAAATGGHRAGCLESSFVAEVKSDLMGEQTILCGMLQAGSIVCYEKMVAEGIDPGYAGKLLQYGWETITEALKFGGITHMMDRLSNPAKIKAFELSEELKDLMRPLYNKHMDDIISGHFSSTMMADWANDDANLLGWRAETGETAFENYPSTDVEISEQEYFDNGILMVAMVRAGVELAFEAMTASGIIDESAYYESLHELPLIANTIARKRLYEMNVVISDTAEYGNYLFANVATPLLREKFMPSVGTDVIGKGLGETSNQVDNATLIAVNETIRNHPVEYIGEELRGYMTDMKRIAVGG</sequence>
<comment type="function">
    <text evidence="1">Involved in the biosynthesis of branched-chain amino acids (BCAA). Catalyzes an alkyl-migration followed by a ketol-acid reduction of (S)-2-acetolactate (S2AL) to yield (R)-2,3-dihydroxy-isovalerate. In the isomerase reaction, S2AL is rearranged via a Mg-dependent methyl migration to produce 3-hydroxy-3-methyl-2-ketobutyrate (HMKB). In the reductase reaction, this 2-ketoacid undergoes a metal-dependent reduction by NADPH to yield (R)-2,3-dihydroxy-isovalerate.</text>
</comment>
<comment type="catalytic activity">
    <reaction evidence="1">
        <text>(2R)-2,3-dihydroxy-3-methylbutanoate + NADP(+) = (2S)-2-acetolactate + NADPH + H(+)</text>
        <dbReference type="Rhea" id="RHEA:22068"/>
        <dbReference type="ChEBI" id="CHEBI:15378"/>
        <dbReference type="ChEBI" id="CHEBI:49072"/>
        <dbReference type="ChEBI" id="CHEBI:57783"/>
        <dbReference type="ChEBI" id="CHEBI:58349"/>
        <dbReference type="ChEBI" id="CHEBI:58476"/>
        <dbReference type="EC" id="1.1.1.86"/>
    </reaction>
</comment>
<comment type="catalytic activity">
    <reaction evidence="1">
        <text>(2R,3R)-2,3-dihydroxy-3-methylpentanoate + NADP(+) = (S)-2-ethyl-2-hydroxy-3-oxobutanoate + NADPH + H(+)</text>
        <dbReference type="Rhea" id="RHEA:13493"/>
        <dbReference type="ChEBI" id="CHEBI:15378"/>
        <dbReference type="ChEBI" id="CHEBI:49256"/>
        <dbReference type="ChEBI" id="CHEBI:49258"/>
        <dbReference type="ChEBI" id="CHEBI:57783"/>
        <dbReference type="ChEBI" id="CHEBI:58349"/>
        <dbReference type="EC" id="1.1.1.86"/>
    </reaction>
</comment>
<comment type="cofactor">
    <cofactor evidence="1">
        <name>Mg(2+)</name>
        <dbReference type="ChEBI" id="CHEBI:18420"/>
    </cofactor>
    <text evidence="1">Binds 2 magnesium ions per subunit.</text>
</comment>
<comment type="pathway">
    <text evidence="1">Amino-acid biosynthesis; L-isoleucine biosynthesis; L-isoleucine from 2-oxobutanoate: step 2/4.</text>
</comment>
<comment type="pathway">
    <text evidence="1">Amino-acid biosynthesis; L-valine biosynthesis; L-valine from pyruvate: step 2/4.</text>
</comment>
<comment type="similarity">
    <text evidence="1">Belongs to the ketol-acid reductoisomerase family.</text>
</comment>
<accession>Q8DDC8</accession>